<proteinExistence type="evidence at protein level"/>
<reference key="1">
    <citation type="journal article" date="1993" name="J. Biol. Chem.">
        <title>Molecular analysis of the essential gene for adenylate kinase from the fission yeast Schizosaccharomyces pombe.</title>
        <authorList>
            <person name="Konrad M."/>
        </authorList>
    </citation>
    <scope>NUCLEOTIDE SEQUENCE [GENOMIC DNA]</scope>
    <scope>FUNCTION</scope>
    <scope>CATALYTIC ACTIVITY</scope>
</reference>
<reference key="2">
    <citation type="journal article" date="2002" name="Nature">
        <title>The genome sequence of Schizosaccharomyces pombe.</title>
        <authorList>
            <person name="Wood V."/>
            <person name="Gwilliam R."/>
            <person name="Rajandream M.A."/>
            <person name="Lyne M.H."/>
            <person name="Lyne R."/>
            <person name="Stewart A."/>
            <person name="Sgouros J.G."/>
            <person name="Peat N."/>
            <person name="Hayles J."/>
            <person name="Baker S.G."/>
            <person name="Basham D."/>
            <person name="Bowman S."/>
            <person name="Brooks K."/>
            <person name="Brown D."/>
            <person name="Brown S."/>
            <person name="Chillingworth T."/>
            <person name="Churcher C.M."/>
            <person name="Collins M."/>
            <person name="Connor R."/>
            <person name="Cronin A."/>
            <person name="Davis P."/>
            <person name="Feltwell T."/>
            <person name="Fraser A."/>
            <person name="Gentles S."/>
            <person name="Goble A."/>
            <person name="Hamlin N."/>
            <person name="Harris D.E."/>
            <person name="Hidalgo J."/>
            <person name="Hodgson G."/>
            <person name="Holroyd S."/>
            <person name="Hornsby T."/>
            <person name="Howarth S."/>
            <person name="Huckle E.J."/>
            <person name="Hunt S."/>
            <person name="Jagels K."/>
            <person name="James K.D."/>
            <person name="Jones L."/>
            <person name="Jones M."/>
            <person name="Leather S."/>
            <person name="McDonald S."/>
            <person name="McLean J."/>
            <person name="Mooney P."/>
            <person name="Moule S."/>
            <person name="Mungall K.L."/>
            <person name="Murphy L.D."/>
            <person name="Niblett D."/>
            <person name="Odell C."/>
            <person name="Oliver K."/>
            <person name="O'Neil S."/>
            <person name="Pearson D."/>
            <person name="Quail M.A."/>
            <person name="Rabbinowitsch E."/>
            <person name="Rutherford K.M."/>
            <person name="Rutter S."/>
            <person name="Saunders D."/>
            <person name="Seeger K."/>
            <person name="Sharp S."/>
            <person name="Skelton J."/>
            <person name="Simmonds M.N."/>
            <person name="Squares R."/>
            <person name="Squares S."/>
            <person name="Stevens K."/>
            <person name="Taylor K."/>
            <person name="Taylor R.G."/>
            <person name="Tivey A."/>
            <person name="Walsh S.V."/>
            <person name="Warren T."/>
            <person name="Whitehead S."/>
            <person name="Woodward J.R."/>
            <person name="Volckaert G."/>
            <person name="Aert R."/>
            <person name="Robben J."/>
            <person name="Grymonprez B."/>
            <person name="Weltjens I."/>
            <person name="Vanstreels E."/>
            <person name="Rieger M."/>
            <person name="Schaefer M."/>
            <person name="Mueller-Auer S."/>
            <person name="Gabel C."/>
            <person name="Fuchs M."/>
            <person name="Duesterhoeft A."/>
            <person name="Fritzc C."/>
            <person name="Holzer E."/>
            <person name="Moestl D."/>
            <person name="Hilbert H."/>
            <person name="Borzym K."/>
            <person name="Langer I."/>
            <person name="Beck A."/>
            <person name="Lehrach H."/>
            <person name="Reinhardt R."/>
            <person name="Pohl T.M."/>
            <person name="Eger P."/>
            <person name="Zimmermann W."/>
            <person name="Wedler H."/>
            <person name="Wambutt R."/>
            <person name="Purnelle B."/>
            <person name="Goffeau A."/>
            <person name="Cadieu E."/>
            <person name="Dreano S."/>
            <person name="Gloux S."/>
            <person name="Lelaure V."/>
            <person name="Mottier S."/>
            <person name="Galibert F."/>
            <person name="Aves S.J."/>
            <person name="Xiang Z."/>
            <person name="Hunt C."/>
            <person name="Moore K."/>
            <person name="Hurst S.M."/>
            <person name="Lucas M."/>
            <person name="Rochet M."/>
            <person name="Gaillardin C."/>
            <person name="Tallada V.A."/>
            <person name="Garzon A."/>
            <person name="Thode G."/>
            <person name="Daga R.R."/>
            <person name="Cruzado L."/>
            <person name="Jimenez J."/>
            <person name="Sanchez M."/>
            <person name="del Rey F."/>
            <person name="Benito J."/>
            <person name="Dominguez A."/>
            <person name="Revuelta J.L."/>
            <person name="Moreno S."/>
            <person name="Armstrong J."/>
            <person name="Forsburg S.L."/>
            <person name="Cerutti L."/>
            <person name="Lowe T."/>
            <person name="McCombie W.R."/>
            <person name="Paulsen I."/>
            <person name="Potashkin J."/>
            <person name="Shpakovski G.V."/>
            <person name="Ussery D."/>
            <person name="Barrell B.G."/>
            <person name="Nurse P."/>
        </authorList>
    </citation>
    <scope>NUCLEOTIDE SEQUENCE [LARGE SCALE GENOMIC DNA]</scope>
    <source>
        <strain>972 / ATCC 24843</strain>
    </source>
</reference>
<reference key="3">
    <citation type="journal article" date="2006" name="Nat. Biotechnol.">
        <title>ORFeome cloning and global analysis of protein localization in the fission yeast Schizosaccharomyces pombe.</title>
        <authorList>
            <person name="Matsuyama A."/>
            <person name="Arai R."/>
            <person name="Yashiroda Y."/>
            <person name="Shirai A."/>
            <person name="Kamata A."/>
            <person name="Sekido S."/>
            <person name="Kobayashi Y."/>
            <person name="Hashimoto A."/>
            <person name="Hamamoto M."/>
            <person name="Hiraoka Y."/>
            <person name="Horinouchi S."/>
            <person name="Yoshida M."/>
        </authorList>
    </citation>
    <scope>SUBCELLULAR LOCATION [LARGE SCALE ANALYSIS]</scope>
</reference>
<accession>P33075</accession>
<evidence type="ECO:0000255" key="1">
    <source>
        <dbReference type="HAMAP-Rule" id="MF_03168"/>
    </source>
</evidence>
<evidence type="ECO:0000269" key="2">
    <source>
    </source>
</evidence>
<evidence type="ECO:0000269" key="3">
    <source>
    </source>
</evidence>
<comment type="function">
    <text evidence="1 3">Catalyzes the reversible transfer of the terminal phosphate group between ATP and AMP. Plays an important role in cellular energy homeostasis and in adenine nucleotide metabolism. Adenylate kinase activity is critical for regulation of the phosphate utilization and the AMP de novo biosynthesis pathways.</text>
</comment>
<comment type="catalytic activity">
    <reaction evidence="1 3">
        <text>AMP + ATP = 2 ADP</text>
        <dbReference type="Rhea" id="RHEA:12973"/>
        <dbReference type="ChEBI" id="CHEBI:30616"/>
        <dbReference type="ChEBI" id="CHEBI:456215"/>
        <dbReference type="ChEBI" id="CHEBI:456216"/>
        <dbReference type="EC" id="2.7.4.3"/>
    </reaction>
</comment>
<comment type="subunit">
    <text evidence="1">Monomer.</text>
</comment>
<comment type="subcellular location">
    <subcellularLocation>
        <location evidence="1 2">Cytoplasm</location>
        <location evidence="1 2">Cytosol</location>
    </subcellularLocation>
    <subcellularLocation>
        <location evidence="1">Mitochondrion intermembrane space</location>
    </subcellularLocation>
    <subcellularLocation>
        <location evidence="2">Nucleus</location>
    </subcellularLocation>
</comment>
<comment type="domain">
    <text evidence="1">Consists of three domains, a large central CORE domain and two small peripheral domains, NMPbind and LID, which undergo movements during catalysis. The LID domain closes over the site of phosphoryl transfer upon ATP binding. Assembling and dissambling the active center during each catalytic cycle provides an effective means to prevent ATP hydrolysis.</text>
</comment>
<comment type="similarity">
    <text evidence="1">Belongs to the adenylate kinase family. AK2 subfamily.</text>
</comment>
<dbReference type="EC" id="2.7.4.3" evidence="1"/>
<dbReference type="EMBL" id="X70363">
    <property type="protein sequence ID" value="CAA49826.1"/>
    <property type="molecule type" value="Genomic_DNA"/>
</dbReference>
<dbReference type="EMBL" id="CU329670">
    <property type="protein sequence ID" value="CAA93553.1"/>
    <property type="molecule type" value="Genomic_DNA"/>
</dbReference>
<dbReference type="PIR" id="A46718">
    <property type="entry name" value="S31338"/>
</dbReference>
<dbReference type="RefSeq" id="NP_593685.1">
    <property type="nucleotide sequence ID" value="NM_001019117.2"/>
</dbReference>
<dbReference type="SMR" id="P33075"/>
<dbReference type="BioGRID" id="279157">
    <property type="interactions" value="1"/>
</dbReference>
<dbReference type="FunCoup" id="P33075">
    <property type="interactions" value="662"/>
</dbReference>
<dbReference type="STRING" id="284812.P33075"/>
<dbReference type="iPTMnet" id="P33075"/>
<dbReference type="PaxDb" id="4896-SPAC4G9.03.1"/>
<dbReference type="EnsemblFungi" id="SPAC4G9.03.1">
    <property type="protein sequence ID" value="SPAC4G9.03.1:pep"/>
    <property type="gene ID" value="SPAC4G9.03"/>
</dbReference>
<dbReference type="GeneID" id="2542704"/>
<dbReference type="KEGG" id="spo:2542704"/>
<dbReference type="PomBase" id="SPAC4G9.03">
    <property type="gene designation" value="adk1"/>
</dbReference>
<dbReference type="VEuPathDB" id="FungiDB:SPAC4G9.03"/>
<dbReference type="eggNOG" id="KOG3078">
    <property type="taxonomic scope" value="Eukaryota"/>
</dbReference>
<dbReference type="HOGENOM" id="CLU_032354_1_0_1"/>
<dbReference type="InParanoid" id="P33075"/>
<dbReference type="OMA" id="HYKVDAA"/>
<dbReference type="PhylomeDB" id="P33075"/>
<dbReference type="Reactome" id="R-SPO-499943">
    <property type="pathway name" value="Interconversion of nucleotide di- and triphosphates"/>
</dbReference>
<dbReference type="PRO" id="PR:P33075"/>
<dbReference type="Proteomes" id="UP000002485">
    <property type="component" value="Chromosome I"/>
</dbReference>
<dbReference type="GO" id="GO:0005737">
    <property type="term" value="C:cytoplasm"/>
    <property type="evidence" value="ECO:0000318"/>
    <property type="project" value="GO_Central"/>
</dbReference>
<dbReference type="GO" id="GO:0005829">
    <property type="term" value="C:cytosol"/>
    <property type="evidence" value="ECO:0007005"/>
    <property type="project" value="PomBase"/>
</dbReference>
<dbReference type="GO" id="GO:0005758">
    <property type="term" value="C:mitochondrial intermembrane space"/>
    <property type="evidence" value="ECO:0000266"/>
    <property type="project" value="PomBase"/>
</dbReference>
<dbReference type="GO" id="GO:0005739">
    <property type="term" value="C:mitochondrion"/>
    <property type="evidence" value="ECO:0000318"/>
    <property type="project" value="GO_Central"/>
</dbReference>
<dbReference type="GO" id="GO:0005634">
    <property type="term" value="C:nucleus"/>
    <property type="evidence" value="ECO:0007005"/>
    <property type="project" value="PomBase"/>
</dbReference>
<dbReference type="GO" id="GO:0004017">
    <property type="term" value="F:adenylate kinase activity"/>
    <property type="evidence" value="ECO:0000314"/>
    <property type="project" value="PomBase"/>
</dbReference>
<dbReference type="GO" id="GO:0005524">
    <property type="term" value="F:ATP binding"/>
    <property type="evidence" value="ECO:0000255"/>
    <property type="project" value="PomBase"/>
</dbReference>
<dbReference type="GO" id="GO:0006172">
    <property type="term" value="P:ADP biosynthetic process"/>
    <property type="evidence" value="ECO:0000314"/>
    <property type="project" value="PomBase"/>
</dbReference>
<dbReference type="GO" id="GO:0046033">
    <property type="term" value="P:AMP metabolic process"/>
    <property type="evidence" value="ECO:0007669"/>
    <property type="project" value="UniProtKB-UniRule"/>
</dbReference>
<dbReference type="GO" id="GO:0046034">
    <property type="term" value="P:ATP metabolic process"/>
    <property type="evidence" value="ECO:0007669"/>
    <property type="project" value="UniProtKB-UniRule"/>
</dbReference>
<dbReference type="CDD" id="cd01428">
    <property type="entry name" value="ADK"/>
    <property type="match status" value="1"/>
</dbReference>
<dbReference type="FunFam" id="3.40.50.300:FF:000106">
    <property type="entry name" value="Adenylate kinase mitochondrial"/>
    <property type="match status" value="1"/>
</dbReference>
<dbReference type="Gene3D" id="3.40.50.300">
    <property type="entry name" value="P-loop containing nucleotide triphosphate hydrolases"/>
    <property type="match status" value="1"/>
</dbReference>
<dbReference type="HAMAP" id="MF_00235">
    <property type="entry name" value="Adenylate_kinase_Adk"/>
    <property type="match status" value="1"/>
</dbReference>
<dbReference type="HAMAP" id="MF_03168">
    <property type="entry name" value="Adenylate_kinase_AK2"/>
    <property type="match status" value="1"/>
</dbReference>
<dbReference type="InterPro" id="IPR006259">
    <property type="entry name" value="Adenyl_kin_sub"/>
</dbReference>
<dbReference type="InterPro" id="IPR000850">
    <property type="entry name" value="Adenylat/UMP-CMP_kin"/>
</dbReference>
<dbReference type="InterPro" id="IPR033690">
    <property type="entry name" value="Adenylat_kinase_CS"/>
</dbReference>
<dbReference type="InterPro" id="IPR007862">
    <property type="entry name" value="Adenylate_kinase_lid-dom"/>
</dbReference>
<dbReference type="InterPro" id="IPR028587">
    <property type="entry name" value="AK2"/>
</dbReference>
<dbReference type="InterPro" id="IPR027417">
    <property type="entry name" value="P-loop_NTPase"/>
</dbReference>
<dbReference type="NCBIfam" id="TIGR01351">
    <property type="entry name" value="adk"/>
    <property type="match status" value="1"/>
</dbReference>
<dbReference type="NCBIfam" id="NF001379">
    <property type="entry name" value="PRK00279.1-1"/>
    <property type="match status" value="1"/>
</dbReference>
<dbReference type="NCBIfam" id="NF001380">
    <property type="entry name" value="PRK00279.1-2"/>
    <property type="match status" value="1"/>
</dbReference>
<dbReference type="NCBIfam" id="NF001381">
    <property type="entry name" value="PRK00279.1-3"/>
    <property type="match status" value="1"/>
</dbReference>
<dbReference type="NCBIfam" id="NF011100">
    <property type="entry name" value="PRK14527.1"/>
    <property type="match status" value="1"/>
</dbReference>
<dbReference type="PANTHER" id="PTHR23359">
    <property type="entry name" value="NUCLEOTIDE KINASE"/>
    <property type="match status" value="1"/>
</dbReference>
<dbReference type="Pfam" id="PF00406">
    <property type="entry name" value="ADK"/>
    <property type="match status" value="1"/>
</dbReference>
<dbReference type="Pfam" id="PF05191">
    <property type="entry name" value="ADK_lid"/>
    <property type="match status" value="1"/>
</dbReference>
<dbReference type="PRINTS" id="PR00094">
    <property type="entry name" value="ADENYLTKNASE"/>
</dbReference>
<dbReference type="SUPFAM" id="SSF52540">
    <property type="entry name" value="P-loop containing nucleoside triphosphate hydrolases"/>
    <property type="match status" value="1"/>
</dbReference>
<dbReference type="PROSITE" id="PS00113">
    <property type="entry name" value="ADENYLATE_KINASE"/>
    <property type="match status" value="1"/>
</dbReference>
<sequence>MAGMRLILVGPPGAGKGTQAPNIQKKYGIAHLATGDMLRSQVARQTELGKEAKKIMDQGGLVSDDIVTGMIKDEILNNPECKNGFILDGFPRTVVQAEKLTALLDELKLDLNTVLELQVDDELLVRRITGRLVHPGSGRSYHLEFNPPKVPMKDDVTGEPLIQRSDDNADALRKRLVTYHEQTTPVVEFYKKKGKWAAVDAAQKPEQVWEQIVAILEKAE</sequence>
<protein>
    <recommendedName>
        <fullName evidence="1">Adenylate kinase</fullName>
        <ecNumber evidence="1">2.7.4.3</ecNumber>
    </recommendedName>
    <alternativeName>
        <fullName evidence="1">ATP-AMP transphosphorylase</fullName>
    </alternativeName>
    <alternativeName>
        <fullName evidence="1">ATP:AMP phosphotransferase</fullName>
    </alternativeName>
    <alternativeName>
        <fullName evidence="1">Adenylate kinase cytosolic and mitochondrial</fullName>
    </alternativeName>
    <alternativeName>
        <fullName evidence="1">Adenylate monophosphate kinase</fullName>
    </alternativeName>
</protein>
<feature type="chain" id="PRO_0000158906" description="Adenylate kinase">
    <location>
        <begin position="1"/>
        <end position="220"/>
    </location>
</feature>
<feature type="region of interest" description="NMP" evidence="1">
    <location>
        <begin position="33"/>
        <end position="62"/>
    </location>
</feature>
<feature type="region of interest" description="LID" evidence="1">
    <location>
        <begin position="130"/>
        <end position="167"/>
    </location>
</feature>
<feature type="binding site" evidence="1">
    <location>
        <begin position="13"/>
        <end position="18"/>
    </location>
    <ligand>
        <name>ATP</name>
        <dbReference type="ChEBI" id="CHEBI:30616"/>
    </ligand>
</feature>
<feature type="binding site" evidence="1">
    <location>
        <position position="34"/>
    </location>
    <ligand>
        <name>AMP</name>
        <dbReference type="ChEBI" id="CHEBI:456215"/>
    </ligand>
</feature>
<feature type="binding site" evidence="1">
    <location>
        <position position="39"/>
    </location>
    <ligand>
        <name>AMP</name>
        <dbReference type="ChEBI" id="CHEBI:456215"/>
    </ligand>
</feature>
<feature type="binding site" evidence="1">
    <location>
        <begin position="60"/>
        <end position="62"/>
    </location>
    <ligand>
        <name>AMP</name>
        <dbReference type="ChEBI" id="CHEBI:456215"/>
    </ligand>
</feature>
<feature type="binding site" evidence="1">
    <location>
        <begin position="89"/>
        <end position="92"/>
    </location>
    <ligand>
        <name>AMP</name>
        <dbReference type="ChEBI" id="CHEBI:456215"/>
    </ligand>
</feature>
<feature type="binding site" evidence="1">
    <location>
        <position position="96"/>
    </location>
    <ligand>
        <name>AMP</name>
        <dbReference type="ChEBI" id="CHEBI:456215"/>
    </ligand>
</feature>
<feature type="binding site" evidence="1">
    <location>
        <position position="131"/>
    </location>
    <ligand>
        <name>ATP</name>
        <dbReference type="ChEBI" id="CHEBI:30616"/>
    </ligand>
</feature>
<feature type="binding site" evidence="1">
    <location>
        <begin position="140"/>
        <end position="141"/>
    </location>
    <ligand>
        <name>ATP</name>
        <dbReference type="ChEBI" id="CHEBI:30616"/>
    </ligand>
</feature>
<feature type="binding site" evidence="1">
    <location>
        <position position="164"/>
    </location>
    <ligand>
        <name>AMP</name>
        <dbReference type="ChEBI" id="CHEBI:456215"/>
    </ligand>
</feature>
<feature type="binding site" evidence="1">
    <location>
        <position position="175"/>
    </location>
    <ligand>
        <name>AMP</name>
        <dbReference type="ChEBI" id="CHEBI:456215"/>
    </ligand>
</feature>
<feature type="binding site" evidence="1">
    <location>
        <position position="203"/>
    </location>
    <ligand>
        <name>ATP</name>
        <dbReference type="ChEBI" id="CHEBI:30616"/>
    </ligand>
</feature>
<keyword id="KW-0067">ATP-binding</keyword>
<keyword id="KW-0963">Cytoplasm</keyword>
<keyword id="KW-0418">Kinase</keyword>
<keyword id="KW-0496">Mitochondrion</keyword>
<keyword id="KW-0547">Nucleotide-binding</keyword>
<keyword id="KW-0539">Nucleus</keyword>
<keyword id="KW-1185">Reference proteome</keyword>
<keyword id="KW-0808">Transferase</keyword>
<name>KAD2_SCHPO</name>
<gene>
    <name type="primary">adk1</name>
    <name type="ORF">SPAC4G9.03</name>
</gene>
<organism>
    <name type="scientific">Schizosaccharomyces pombe (strain 972 / ATCC 24843)</name>
    <name type="common">Fission yeast</name>
    <dbReference type="NCBI Taxonomy" id="284812"/>
    <lineage>
        <taxon>Eukaryota</taxon>
        <taxon>Fungi</taxon>
        <taxon>Dikarya</taxon>
        <taxon>Ascomycota</taxon>
        <taxon>Taphrinomycotina</taxon>
        <taxon>Schizosaccharomycetes</taxon>
        <taxon>Schizosaccharomycetales</taxon>
        <taxon>Schizosaccharomycetaceae</taxon>
        <taxon>Schizosaccharomyces</taxon>
    </lineage>
</organism>